<reference key="1">
    <citation type="journal article" date="2008" name="Proc. Natl. Acad. Sci. U.S.A.">
        <title>Nitrogen fixation island and rhizosphere competence traits in the genome of root-associated Pseudomonas stutzeri A1501.</title>
        <authorList>
            <person name="Yan Y."/>
            <person name="Yang J."/>
            <person name="Dou Y."/>
            <person name="Chen M."/>
            <person name="Ping S."/>
            <person name="Peng J."/>
            <person name="Lu W."/>
            <person name="Zhang W."/>
            <person name="Yao Z."/>
            <person name="Li H."/>
            <person name="Liu W."/>
            <person name="He S."/>
            <person name="Geng L."/>
            <person name="Zhang X."/>
            <person name="Yang F."/>
            <person name="Yu H."/>
            <person name="Zhan Y."/>
            <person name="Li D."/>
            <person name="Lin Z."/>
            <person name="Wang Y."/>
            <person name="Elmerich C."/>
            <person name="Lin M."/>
            <person name="Jin Q."/>
        </authorList>
    </citation>
    <scope>NUCLEOTIDE SEQUENCE [LARGE SCALE GENOMIC DNA]</scope>
    <source>
        <strain>A1501</strain>
    </source>
</reference>
<comment type="function">
    <text evidence="1">Catalyzes the formation of S-adenosylmethionine (AdoMet) from methionine and ATP. The overall synthetic reaction is composed of two sequential steps, AdoMet formation and the subsequent tripolyphosphate hydrolysis which occurs prior to release of AdoMet from the enzyme.</text>
</comment>
<comment type="catalytic activity">
    <reaction evidence="1">
        <text>L-methionine + ATP + H2O = S-adenosyl-L-methionine + phosphate + diphosphate</text>
        <dbReference type="Rhea" id="RHEA:21080"/>
        <dbReference type="ChEBI" id="CHEBI:15377"/>
        <dbReference type="ChEBI" id="CHEBI:30616"/>
        <dbReference type="ChEBI" id="CHEBI:33019"/>
        <dbReference type="ChEBI" id="CHEBI:43474"/>
        <dbReference type="ChEBI" id="CHEBI:57844"/>
        <dbReference type="ChEBI" id="CHEBI:59789"/>
        <dbReference type="EC" id="2.5.1.6"/>
    </reaction>
</comment>
<comment type="cofactor">
    <cofactor evidence="1">
        <name>Mg(2+)</name>
        <dbReference type="ChEBI" id="CHEBI:18420"/>
    </cofactor>
    <text evidence="1">Binds 2 divalent ions per subunit.</text>
</comment>
<comment type="cofactor">
    <cofactor evidence="1">
        <name>K(+)</name>
        <dbReference type="ChEBI" id="CHEBI:29103"/>
    </cofactor>
    <text evidence="1">Binds 1 potassium ion per subunit.</text>
</comment>
<comment type="pathway">
    <text evidence="1">Amino-acid biosynthesis; S-adenosyl-L-methionine biosynthesis; S-adenosyl-L-methionine from L-methionine: step 1/1.</text>
</comment>
<comment type="subunit">
    <text evidence="1">Homotetramer; dimer of dimers.</text>
</comment>
<comment type="subcellular location">
    <subcellularLocation>
        <location evidence="1">Cytoplasm</location>
    </subcellularLocation>
</comment>
<comment type="similarity">
    <text evidence="1">Belongs to the AdoMet synthase family.</text>
</comment>
<feature type="chain" id="PRO_0000302966" description="S-adenosylmethionine synthase">
    <location>
        <begin position="1"/>
        <end position="396"/>
    </location>
</feature>
<feature type="region of interest" description="Flexible loop" evidence="1">
    <location>
        <begin position="100"/>
        <end position="110"/>
    </location>
</feature>
<feature type="binding site" description="in other chain" evidence="1">
    <location>
        <position position="16"/>
    </location>
    <ligand>
        <name>ATP</name>
        <dbReference type="ChEBI" id="CHEBI:30616"/>
        <note>ligand shared between two neighboring subunits</note>
    </ligand>
</feature>
<feature type="binding site" evidence="1">
    <location>
        <position position="18"/>
    </location>
    <ligand>
        <name>Mg(2+)</name>
        <dbReference type="ChEBI" id="CHEBI:18420"/>
    </ligand>
</feature>
<feature type="binding site" evidence="1">
    <location>
        <position position="44"/>
    </location>
    <ligand>
        <name>K(+)</name>
        <dbReference type="ChEBI" id="CHEBI:29103"/>
    </ligand>
</feature>
<feature type="binding site" description="in other chain" evidence="1">
    <location>
        <position position="57"/>
    </location>
    <ligand>
        <name>L-methionine</name>
        <dbReference type="ChEBI" id="CHEBI:57844"/>
        <note>ligand shared between two neighboring subunits</note>
    </ligand>
</feature>
<feature type="binding site" description="in other chain" evidence="1">
    <location>
        <position position="100"/>
    </location>
    <ligand>
        <name>L-methionine</name>
        <dbReference type="ChEBI" id="CHEBI:57844"/>
        <note>ligand shared between two neighboring subunits</note>
    </ligand>
</feature>
<feature type="binding site" description="in other chain" evidence="1">
    <location>
        <begin position="165"/>
        <end position="167"/>
    </location>
    <ligand>
        <name>ATP</name>
        <dbReference type="ChEBI" id="CHEBI:30616"/>
        <note>ligand shared between two neighboring subunits</note>
    </ligand>
</feature>
<feature type="binding site" evidence="1">
    <location>
        <position position="240"/>
    </location>
    <ligand>
        <name>ATP</name>
        <dbReference type="ChEBI" id="CHEBI:30616"/>
        <note>ligand shared between two neighboring subunits</note>
    </ligand>
</feature>
<feature type="binding site" evidence="1">
    <location>
        <position position="240"/>
    </location>
    <ligand>
        <name>L-methionine</name>
        <dbReference type="ChEBI" id="CHEBI:57844"/>
        <note>ligand shared between two neighboring subunits</note>
    </ligand>
</feature>
<feature type="binding site" description="in other chain" evidence="1">
    <location>
        <begin position="246"/>
        <end position="247"/>
    </location>
    <ligand>
        <name>ATP</name>
        <dbReference type="ChEBI" id="CHEBI:30616"/>
        <note>ligand shared between two neighboring subunits</note>
    </ligand>
</feature>
<feature type="binding site" evidence="1">
    <location>
        <position position="263"/>
    </location>
    <ligand>
        <name>ATP</name>
        <dbReference type="ChEBI" id="CHEBI:30616"/>
        <note>ligand shared between two neighboring subunits</note>
    </ligand>
</feature>
<feature type="binding site" evidence="1">
    <location>
        <position position="267"/>
    </location>
    <ligand>
        <name>ATP</name>
        <dbReference type="ChEBI" id="CHEBI:30616"/>
        <note>ligand shared between two neighboring subunits</note>
    </ligand>
</feature>
<feature type="binding site" description="in other chain" evidence="1">
    <location>
        <position position="271"/>
    </location>
    <ligand>
        <name>L-methionine</name>
        <dbReference type="ChEBI" id="CHEBI:57844"/>
        <note>ligand shared between two neighboring subunits</note>
    </ligand>
</feature>
<proteinExistence type="inferred from homology"/>
<name>METK_STUS1</name>
<evidence type="ECO:0000255" key="1">
    <source>
        <dbReference type="HAMAP-Rule" id="MF_00086"/>
    </source>
</evidence>
<gene>
    <name evidence="1" type="primary">metK</name>
    <name type="ordered locus">PST_3926</name>
</gene>
<organism>
    <name type="scientific">Stutzerimonas stutzeri (strain A1501)</name>
    <name type="common">Pseudomonas stutzeri</name>
    <dbReference type="NCBI Taxonomy" id="379731"/>
    <lineage>
        <taxon>Bacteria</taxon>
        <taxon>Pseudomonadati</taxon>
        <taxon>Pseudomonadota</taxon>
        <taxon>Gammaproteobacteria</taxon>
        <taxon>Pseudomonadales</taxon>
        <taxon>Pseudomonadaceae</taxon>
        <taxon>Stutzerimonas</taxon>
    </lineage>
</organism>
<dbReference type="EC" id="2.5.1.6" evidence="1"/>
<dbReference type="EMBL" id="CP000304">
    <property type="protein sequence ID" value="ABP81549.1"/>
    <property type="molecule type" value="Genomic_DNA"/>
</dbReference>
<dbReference type="RefSeq" id="WP_011914933.1">
    <property type="nucleotide sequence ID" value="NC_009434.1"/>
</dbReference>
<dbReference type="SMR" id="A4VRE8"/>
<dbReference type="GeneID" id="66823214"/>
<dbReference type="KEGG" id="psa:PST_3926"/>
<dbReference type="eggNOG" id="COG0192">
    <property type="taxonomic scope" value="Bacteria"/>
</dbReference>
<dbReference type="HOGENOM" id="CLU_041802_1_1_6"/>
<dbReference type="UniPathway" id="UPA00315">
    <property type="reaction ID" value="UER00080"/>
</dbReference>
<dbReference type="Proteomes" id="UP000000233">
    <property type="component" value="Chromosome"/>
</dbReference>
<dbReference type="GO" id="GO:0005737">
    <property type="term" value="C:cytoplasm"/>
    <property type="evidence" value="ECO:0007669"/>
    <property type="project" value="UniProtKB-SubCell"/>
</dbReference>
<dbReference type="GO" id="GO:0005524">
    <property type="term" value="F:ATP binding"/>
    <property type="evidence" value="ECO:0007669"/>
    <property type="project" value="UniProtKB-UniRule"/>
</dbReference>
<dbReference type="GO" id="GO:0000287">
    <property type="term" value="F:magnesium ion binding"/>
    <property type="evidence" value="ECO:0007669"/>
    <property type="project" value="UniProtKB-UniRule"/>
</dbReference>
<dbReference type="GO" id="GO:0004478">
    <property type="term" value="F:methionine adenosyltransferase activity"/>
    <property type="evidence" value="ECO:0007669"/>
    <property type="project" value="UniProtKB-UniRule"/>
</dbReference>
<dbReference type="GO" id="GO:0006730">
    <property type="term" value="P:one-carbon metabolic process"/>
    <property type="evidence" value="ECO:0007669"/>
    <property type="project" value="UniProtKB-KW"/>
</dbReference>
<dbReference type="GO" id="GO:0006556">
    <property type="term" value="P:S-adenosylmethionine biosynthetic process"/>
    <property type="evidence" value="ECO:0007669"/>
    <property type="project" value="UniProtKB-UniRule"/>
</dbReference>
<dbReference type="CDD" id="cd18079">
    <property type="entry name" value="S-AdoMet_synt"/>
    <property type="match status" value="1"/>
</dbReference>
<dbReference type="FunFam" id="3.30.300.10:FF:000003">
    <property type="entry name" value="S-adenosylmethionine synthase"/>
    <property type="match status" value="1"/>
</dbReference>
<dbReference type="Gene3D" id="3.30.300.10">
    <property type="match status" value="3"/>
</dbReference>
<dbReference type="HAMAP" id="MF_00086">
    <property type="entry name" value="S_AdoMet_synth1"/>
    <property type="match status" value="1"/>
</dbReference>
<dbReference type="InterPro" id="IPR022631">
    <property type="entry name" value="ADOMET_SYNTHASE_CS"/>
</dbReference>
<dbReference type="InterPro" id="IPR022630">
    <property type="entry name" value="S-AdoMet_synt_C"/>
</dbReference>
<dbReference type="InterPro" id="IPR022629">
    <property type="entry name" value="S-AdoMet_synt_central"/>
</dbReference>
<dbReference type="InterPro" id="IPR022628">
    <property type="entry name" value="S-AdoMet_synt_N"/>
</dbReference>
<dbReference type="InterPro" id="IPR002133">
    <property type="entry name" value="S-AdoMet_synthetase"/>
</dbReference>
<dbReference type="InterPro" id="IPR022636">
    <property type="entry name" value="S-AdoMet_synthetase_sfam"/>
</dbReference>
<dbReference type="NCBIfam" id="TIGR01034">
    <property type="entry name" value="metK"/>
    <property type="match status" value="1"/>
</dbReference>
<dbReference type="PANTHER" id="PTHR11964">
    <property type="entry name" value="S-ADENOSYLMETHIONINE SYNTHETASE"/>
    <property type="match status" value="1"/>
</dbReference>
<dbReference type="Pfam" id="PF02773">
    <property type="entry name" value="S-AdoMet_synt_C"/>
    <property type="match status" value="1"/>
</dbReference>
<dbReference type="Pfam" id="PF02772">
    <property type="entry name" value="S-AdoMet_synt_M"/>
    <property type="match status" value="1"/>
</dbReference>
<dbReference type="Pfam" id="PF00438">
    <property type="entry name" value="S-AdoMet_synt_N"/>
    <property type="match status" value="1"/>
</dbReference>
<dbReference type="PIRSF" id="PIRSF000497">
    <property type="entry name" value="MAT"/>
    <property type="match status" value="1"/>
</dbReference>
<dbReference type="SUPFAM" id="SSF55973">
    <property type="entry name" value="S-adenosylmethionine synthetase"/>
    <property type="match status" value="3"/>
</dbReference>
<dbReference type="PROSITE" id="PS00376">
    <property type="entry name" value="ADOMET_SYNTHASE_1"/>
    <property type="match status" value="1"/>
</dbReference>
<dbReference type="PROSITE" id="PS00377">
    <property type="entry name" value="ADOMET_SYNTHASE_2"/>
    <property type="match status" value="1"/>
</dbReference>
<keyword id="KW-0067">ATP-binding</keyword>
<keyword id="KW-0963">Cytoplasm</keyword>
<keyword id="KW-0460">Magnesium</keyword>
<keyword id="KW-0479">Metal-binding</keyword>
<keyword id="KW-0547">Nucleotide-binding</keyword>
<keyword id="KW-0554">One-carbon metabolism</keyword>
<keyword id="KW-0630">Potassium</keyword>
<keyword id="KW-1185">Reference proteome</keyword>
<keyword id="KW-0808">Transferase</keyword>
<protein>
    <recommendedName>
        <fullName evidence="1">S-adenosylmethionine synthase</fullName>
        <shortName evidence="1">AdoMet synthase</shortName>
        <ecNumber evidence="1">2.5.1.6</ecNumber>
    </recommendedName>
    <alternativeName>
        <fullName evidence="1">MAT</fullName>
    </alternativeName>
    <alternativeName>
        <fullName evidence="1">Methionine adenosyltransferase</fullName>
    </alternativeName>
</protein>
<accession>A4VRE8</accession>
<sequence length="396" mass="42611">MSEYSIFTSESVSEGHPDKIADQISDAVLDAIIAEDKHARVACETLVKTGVAIVAGEVTTSAWVDLEQLVRDVIVDIGYNSSEVGFDGATCGIINIIGKQSVDIAQGVDRTKPEDQGAGDQGLMFGYASNETDVLMPAPIRFSHALVERQAEARKNGLLPWLRPDAKSQVTCRYENGQVVGIDAVVLSTQHNPDVKQSDLREAVMELIIKHSLPAELLHKDTQYHINPTGQFVIGGPVGDCGLTGRKIIVDTYGGMARHGGGAFSGKDPSKVDRSAAYAGRYVAKNIVAAGLADRCEIQVSYAIGVAQPTSISLNTFGTGKLGDDKIIALVREHFDLRPYAITRMLDLLHPMYRATAAYGHFGRTPYEMTVGADTFTAFTWEKTDKADALRAAAGL</sequence>